<accession>A6U858</accession>
<reference key="1">
    <citation type="submission" date="2007-06" db="EMBL/GenBank/DDBJ databases">
        <title>Complete sequence of Sinorhizobium medicae WSM419 chromosome.</title>
        <authorList>
            <consortium name="US DOE Joint Genome Institute"/>
            <person name="Copeland A."/>
            <person name="Lucas S."/>
            <person name="Lapidus A."/>
            <person name="Barry K."/>
            <person name="Glavina del Rio T."/>
            <person name="Dalin E."/>
            <person name="Tice H."/>
            <person name="Pitluck S."/>
            <person name="Chain P."/>
            <person name="Malfatti S."/>
            <person name="Shin M."/>
            <person name="Vergez L."/>
            <person name="Schmutz J."/>
            <person name="Larimer F."/>
            <person name="Land M."/>
            <person name="Hauser L."/>
            <person name="Kyrpides N."/>
            <person name="Mikhailova N."/>
            <person name="Reeve W.G."/>
            <person name="Richardson P."/>
        </authorList>
    </citation>
    <scope>NUCLEOTIDE SEQUENCE [LARGE SCALE GENOMIC DNA]</scope>
    <source>
        <strain>WSM419</strain>
    </source>
</reference>
<protein>
    <recommendedName>
        <fullName evidence="1">Small ribosomal subunit protein uS10</fullName>
    </recommendedName>
    <alternativeName>
        <fullName evidence="2">30S ribosomal protein S10</fullName>
    </alternativeName>
</protein>
<name>RS10_SINMW</name>
<gene>
    <name evidence="1" type="primary">rpsJ</name>
    <name type="ordered locus">Smed_0985</name>
</gene>
<sequence length="102" mass="11556">MNGQNIRIRLKAFDHRILDASTREIVSTAKRTGASVRGPVPLPTRIEKFTVNRSPHVDKKSREQFEMRTHKRLLDIVDPTPQTVDALMKLDLAAGVDVEIKL</sequence>
<keyword id="KW-0687">Ribonucleoprotein</keyword>
<keyword id="KW-0689">Ribosomal protein</keyword>
<organism>
    <name type="scientific">Sinorhizobium medicae (strain WSM419)</name>
    <name type="common">Ensifer medicae</name>
    <dbReference type="NCBI Taxonomy" id="366394"/>
    <lineage>
        <taxon>Bacteria</taxon>
        <taxon>Pseudomonadati</taxon>
        <taxon>Pseudomonadota</taxon>
        <taxon>Alphaproteobacteria</taxon>
        <taxon>Hyphomicrobiales</taxon>
        <taxon>Rhizobiaceae</taxon>
        <taxon>Sinorhizobium/Ensifer group</taxon>
        <taxon>Sinorhizobium</taxon>
    </lineage>
</organism>
<dbReference type="EMBL" id="CP000738">
    <property type="protein sequence ID" value="ABR59838.1"/>
    <property type="molecule type" value="Genomic_DNA"/>
</dbReference>
<dbReference type="RefSeq" id="WP_003507767.1">
    <property type="nucleotide sequence ID" value="NC_009636.1"/>
</dbReference>
<dbReference type="RefSeq" id="YP_001326673.1">
    <property type="nucleotide sequence ID" value="NC_009636.1"/>
</dbReference>
<dbReference type="SMR" id="A6U858"/>
<dbReference type="STRING" id="366394.Smed_0985"/>
<dbReference type="GeneID" id="97364694"/>
<dbReference type="KEGG" id="smd:Smed_0985"/>
<dbReference type="PATRIC" id="fig|366394.8.peg.4106"/>
<dbReference type="eggNOG" id="COG0051">
    <property type="taxonomic scope" value="Bacteria"/>
</dbReference>
<dbReference type="HOGENOM" id="CLU_122625_1_3_5"/>
<dbReference type="OrthoDB" id="9804464at2"/>
<dbReference type="PRO" id="PR:A6U858"/>
<dbReference type="Proteomes" id="UP000001108">
    <property type="component" value="Chromosome"/>
</dbReference>
<dbReference type="GO" id="GO:1990904">
    <property type="term" value="C:ribonucleoprotein complex"/>
    <property type="evidence" value="ECO:0007669"/>
    <property type="project" value="UniProtKB-KW"/>
</dbReference>
<dbReference type="GO" id="GO:0005840">
    <property type="term" value="C:ribosome"/>
    <property type="evidence" value="ECO:0007669"/>
    <property type="project" value="UniProtKB-KW"/>
</dbReference>
<dbReference type="GO" id="GO:0003735">
    <property type="term" value="F:structural constituent of ribosome"/>
    <property type="evidence" value="ECO:0007669"/>
    <property type="project" value="InterPro"/>
</dbReference>
<dbReference type="GO" id="GO:0000049">
    <property type="term" value="F:tRNA binding"/>
    <property type="evidence" value="ECO:0007669"/>
    <property type="project" value="UniProtKB-UniRule"/>
</dbReference>
<dbReference type="GO" id="GO:0006412">
    <property type="term" value="P:translation"/>
    <property type="evidence" value="ECO:0007669"/>
    <property type="project" value="UniProtKB-UniRule"/>
</dbReference>
<dbReference type="FunFam" id="3.30.70.600:FF:000001">
    <property type="entry name" value="30S ribosomal protein S10"/>
    <property type="match status" value="1"/>
</dbReference>
<dbReference type="Gene3D" id="3.30.70.600">
    <property type="entry name" value="Ribosomal protein S10 domain"/>
    <property type="match status" value="1"/>
</dbReference>
<dbReference type="HAMAP" id="MF_00508">
    <property type="entry name" value="Ribosomal_uS10"/>
    <property type="match status" value="1"/>
</dbReference>
<dbReference type="InterPro" id="IPR001848">
    <property type="entry name" value="Ribosomal_uS10"/>
</dbReference>
<dbReference type="InterPro" id="IPR018268">
    <property type="entry name" value="Ribosomal_uS10_CS"/>
</dbReference>
<dbReference type="InterPro" id="IPR027486">
    <property type="entry name" value="Ribosomal_uS10_dom"/>
</dbReference>
<dbReference type="InterPro" id="IPR036838">
    <property type="entry name" value="Ribosomal_uS10_dom_sf"/>
</dbReference>
<dbReference type="NCBIfam" id="NF001861">
    <property type="entry name" value="PRK00596.1"/>
    <property type="match status" value="1"/>
</dbReference>
<dbReference type="NCBIfam" id="TIGR01049">
    <property type="entry name" value="rpsJ_bact"/>
    <property type="match status" value="1"/>
</dbReference>
<dbReference type="PANTHER" id="PTHR11700">
    <property type="entry name" value="30S RIBOSOMAL PROTEIN S10 FAMILY MEMBER"/>
    <property type="match status" value="1"/>
</dbReference>
<dbReference type="Pfam" id="PF00338">
    <property type="entry name" value="Ribosomal_S10"/>
    <property type="match status" value="1"/>
</dbReference>
<dbReference type="PRINTS" id="PR00971">
    <property type="entry name" value="RIBOSOMALS10"/>
</dbReference>
<dbReference type="SMART" id="SM01403">
    <property type="entry name" value="Ribosomal_S10"/>
    <property type="match status" value="1"/>
</dbReference>
<dbReference type="SUPFAM" id="SSF54999">
    <property type="entry name" value="Ribosomal protein S10"/>
    <property type="match status" value="1"/>
</dbReference>
<dbReference type="PROSITE" id="PS00361">
    <property type="entry name" value="RIBOSOMAL_S10"/>
    <property type="match status" value="1"/>
</dbReference>
<comment type="function">
    <text evidence="1">Involved in the binding of tRNA to the ribosomes.</text>
</comment>
<comment type="subunit">
    <text evidence="1">Part of the 30S ribosomal subunit.</text>
</comment>
<comment type="similarity">
    <text evidence="1">Belongs to the universal ribosomal protein uS10 family.</text>
</comment>
<proteinExistence type="inferred from homology"/>
<evidence type="ECO:0000255" key="1">
    <source>
        <dbReference type="HAMAP-Rule" id="MF_00508"/>
    </source>
</evidence>
<evidence type="ECO:0000305" key="2"/>
<feature type="chain" id="PRO_1000015118" description="Small ribosomal subunit protein uS10">
    <location>
        <begin position="1"/>
        <end position="102"/>
    </location>
</feature>